<keyword id="KW-0997">Cell inner membrane</keyword>
<keyword id="KW-1003">Cell membrane</keyword>
<keyword id="KW-0472">Membrane</keyword>
<keyword id="KW-1185">Reference proteome</keyword>
<keyword id="KW-0808">Transferase</keyword>
<keyword id="KW-0812">Transmembrane</keyword>
<keyword id="KW-1133">Transmembrane helix</keyword>
<gene>
    <name evidence="1" type="primary">lgt</name>
    <name type="ordered locus">BMA0679</name>
</gene>
<sequence length="296" mass="33095">MIIHPNFDPVAIHLGPLAVRWYGLMYLVGFILAIVVGRLRLKLPHVAAQGWSAKDIDDMMFYGVLGVVLGGRLGYVLFYKAGYYFSHPLDIFRVWEGGMSFHGGFLGVTLAMALFAWQRKRHWLEVTDFVAPMVPTGLAAGRLGNFINGELWGRVTSPDAPWAMLFPGASRDDAAWLAAHQDIAAKWNLNEVFLSHQMLPRHPSQLYEIALEGIALFFVLWFFSRKPRPMGAISALFLIGYGAARFTVEFAREPDDFLGLLTFGLSMGQWLSLPMIVAGVLMMIWAYRRGGVAKQA</sequence>
<organism>
    <name type="scientific">Burkholderia mallei (strain ATCC 23344)</name>
    <dbReference type="NCBI Taxonomy" id="243160"/>
    <lineage>
        <taxon>Bacteria</taxon>
        <taxon>Pseudomonadati</taxon>
        <taxon>Pseudomonadota</taxon>
        <taxon>Betaproteobacteria</taxon>
        <taxon>Burkholderiales</taxon>
        <taxon>Burkholderiaceae</taxon>
        <taxon>Burkholderia</taxon>
        <taxon>pseudomallei group</taxon>
    </lineage>
</organism>
<evidence type="ECO:0000255" key="1">
    <source>
        <dbReference type="HAMAP-Rule" id="MF_01147"/>
    </source>
</evidence>
<protein>
    <recommendedName>
        <fullName evidence="1">Phosphatidylglycerol--prolipoprotein diacylglyceryl transferase</fullName>
        <ecNumber evidence="1">2.5.1.145</ecNumber>
    </recommendedName>
</protein>
<dbReference type="EC" id="2.5.1.145" evidence="1"/>
<dbReference type="EMBL" id="CP000010">
    <property type="protein sequence ID" value="AAU49612.1"/>
    <property type="molecule type" value="Genomic_DNA"/>
</dbReference>
<dbReference type="RefSeq" id="WP_004191241.1">
    <property type="nucleotide sequence ID" value="NC_006348.1"/>
</dbReference>
<dbReference type="RefSeq" id="YP_102454.1">
    <property type="nucleotide sequence ID" value="NC_006348.1"/>
</dbReference>
<dbReference type="SMR" id="Q62LG5"/>
<dbReference type="GeneID" id="93059470"/>
<dbReference type="KEGG" id="bma:BMA0679"/>
<dbReference type="PATRIC" id="fig|243160.12.peg.701"/>
<dbReference type="eggNOG" id="COG0682">
    <property type="taxonomic scope" value="Bacteria"/>
</dbReference>
<dbReference type="HOGENOM" id="CLU_013386_1_0_4"/>
<dbReference type="UniPathway" id="UPA00664"/>
<dbReference type="Proteomes" id="UP000006693">
    <property type="component" value="Chromosome 1"/>
</dbReference>
<dbReference type="GO" id="GO:0005886">
    <property type="term" value="C:plasma membrane"/>
    <property type="evidence" value="ECO:0007669"/>
    <property type="project" value="UniProtKB-SubCell"/>
</dbReference>
<dbReference type="GO" id="GO:0008961">
    <property type="term" value="F:phosphatidylglycerol-prolipoprotein diacylglyceryl transferase activity"/>
    <property type="evidence" value="ECO:0007669"/>
    <property type="project" value="UniProtKB-UniRule"/>
</dbReference>
<dbReference type="GO" id="GO:0042158">
    <property type="term" value="P:lipoprotein biosynthetic process"/>
    <property type="evidence" value="ECO:0007669"/>
    <property type="project" value="UniProtKB-UniRule"/>
</dbReference>
<dbReference type="HAMAP" id="MF_01147">
    <property type="entry name" value="Lgt"/>
    <property type="match status" value="1"/>
</dbReference>
<dbReference type="InterPro" id="IPR001640">
    <property type="entry name" value="Lgt"/>
</dbReference>
<dbReference type="NCBIfam" id="TIGR00544">
    <property type="entry name" value="lgt"/>
    <property type="match status" value="1"/>
</dbReference>
<dbReference type="PANTHER" id="PTHR30589:SF0">
    <property type="entry name" value="PHOSPHATIDYLGLYCEROL--PROLIPOPROTEIN DIACYLGLYCERYL TRANSFERASE"/>
    <property type="match status" value="1"/>
</dbReference>
<dbReference type="PANTHER" id="PTHR30589">
    <property type="entry name" value="PROLIPOPROTEIN DIACYLGLYCERYL TRANSFERASE"/>
    <property type="match status" value="1"/>
</dbReference>
<dbReference type="Pfam" id="PF01790">
    <property type="entry name" value="LGT"/>
    <property type="match status" value="1"/>
</dbReference>
<dbReference type="PROSITE" id="PS01311">
    <property type="entry name" value="LGT"/>
    <property type="match status" value="1"/>
</dbReference>
<accession>Q62LG5</accession>
<reference key="1">
    <citation type="journal article" date="2004" name="Proc. Natl. Acad. Sci. U.S.A.">
        <title>Structural flexibility in the Burkholderia mallei genome.</title>
        <authorList>
            <person name="Nierman W.C."/>
            <person name="DeShazer D."/>
            <person name="Kim H.S."/>
            <person name="Tettelin H."/>
            <person name="Nelson K.E."/>
            <person name="Feldblyum T.V."/>
            <person name="Ulrich R.L."/>
            <person name="Ronning C.M."/>
            <person name="Brinkac L.M."/>
            <person name="Daugherty S.C."/>
            <person name="Davidsen T.D."/>
            <person name="DeBoy R.T."/>
            <person name="Dimitrov G."/>
            <person name="Dodson R.J."/>
            <person name="Durkin A.S."/>
            <person name="Gwinn M.L."/>
            <person name="Haft D.H."/>
            <person name="Khouri H.M."/>
            <person name="Kolonay J.F."/>
            <person name="Madupu R."/>
            <person name="Mohammoud Y."/>
            <person name="Nelson W.C."/>
            <person name="Radune D."/>
            <person name="Romero C.M."/>
            <person name="Sarria S."/>
            <person name="Selengut J."/>
            <person name="Shamblin C."/>
            <person name="Sullivan S.A."/>
            <person name="White O."/>
            <person name="Yu Y."/>
            <person name="Zafar N."/>
            <person name="Zhou L."/>
            <person name="Fraser C.M."/>
        </authorList>
    </citation>
    <scope>NUCLEOTIDE SEQUENCE [LARGE SCALE GENOMIC DNA]</scope>
    <source>
        <strain>ATCC 23344</strain>
    </source>
</reference>
<name>LGT_BURMA</name>
<proteinExistence type="inferred from homology"/>
<feature type="chain" id="PRO_0000172573" description="Phosphatidylglycerol--prolipoprotein diacylglyceryl transferase">
    <location>
        <begin position="1"/>
        <end position="296"/>
    </location>
</feature>
<feature type="transmembrane region" description="Helical" evidence="1">
    <location>
        <begin position="17"/>
        <end position="37"/>
    </location>
</feature>
<feature type="transmembrane region" description="Helical" evidence="1">
    <location>
        <begin position="59"/>
        <end position="79"/>
    </location>
</feature>
<feature type="transmembrane region" description="Helical" evidence="1">
    <location>
        <begin position="97"/>
        <end position="117"/>
    </location>
</feature>
<feature type="transmembrane region" description="Helical" evidence="1">
    <location>
        <begin position="230"/>
        <end position="250"/>
    </location>
</feature>
<feature type="transmembrane region" description="Helical" evidence="1">
    <location>
        <begin position="265"/>
        <end position="285"/>
    </location>
</feature>
<feature type="binding site" evidence="1">
    <location>
        <position position="142"/>
    </location>
    <ligand>
        <name>a 1,2-diacyl-sn-glycero-3-phospho-(1'-sn-glycerol)</name>
        <dbReference type="ChEBI" id="CHEBI:64716"/>
    </ligand>
</feature>
<comment type="function">
    <text evidence="1">Catalyzes the transfer of the diacylglyceryl group from phosphatidylglycerol to the sulfhydryl group of the N-terminal cysteine of a prolipoprotein, the first step in the formation of mature lipoproteins.</text>
</comment>
<comment type="catalytic activity">
    <reaction evidence="1">
        <text>L-cysteinyl-[prolipoprotein] + a 1,2-diacyl-sn-glycero-3-phospho-(1'-sn-glycerol) = an S-1,2-diacyl-sn-glyceryl-L-cysteinyl-[prolipoprotein] + sn-glycerol 1-phosphate + H(+)</text>
        <dbReference type="Rhea" id="RHEA:56712"/>
        <dbReference type="Rhea" id="RHEA-COMP:14679"/>
        <dbReference type="Rhea" id="RHEA-COMP:14680"/>
        <dbReference type="ChEBI" id="CHEBI:15378"/>
        <dbReference type="ChEBI" id="CHEBI:29950"/>
        <dbReference type="ChEBI" id="CHEBI:57685"/>
        <dbReference type="ChEBI" id="CHEBI:64716"/>
        <dbReference type="ChEBI" id="CHEBI:140658"/>
        <dbReference type="EC" id="2.5.1.145"/>
    </reaction>
</comment>
<comment type="pathway">
    <text evidence="1">Protein modification; lipoprotein biosynthesis (diacylglyceryl transfer).</text>
</comment>
<comment type="subcellular location">
    <subcellularLocation>
        <location evidence="1">Cell inner membrane</location>
        <topology evidence="1">Multi-pass membrane protein</topology>
    </subcellularLocation>
</comment>
<comment type="similarity">
    <text evidence="1">Belongs to the Lgt family.</text>
</comment>